<sequence length="87" mass="9601">MKAQIFVVVLGLAALSVLCYGSEADESALHEEIFQLLAASDEVPKPQERDCVRFWGKCSQTSDCCPHLACKSKWPRNICVWDGSVGK</sequence>
<evidence type="ECO:0000255" key="1"/>
<evidence type="ECO:0000269" key="2">
    <source>
    </source>
</evidence>
<evidence type="ECO:0000269" key="3">
    <source>
    </source>
</evidence>
<evidence type="ECO:0000269" key="4">
    <source>
    </source>
</evidence>
<evidence type="ECO:0000269" key="5">
    <source>
    </source>
</evidence>
<evidence type="ECO:0000269" key="6">
    <source>
    </source>
</evidence>
<evidence type="ECO:0000269" key="7">
    <source>
    </source>
</evidence>
<evidence type="ECO:0000269" key="8">
    <source>
    </source>
</evidence>
<evidence type="ECO:0000303" key="9">
    <source>
    </source>
</evidence>
<evidence type="ECO:0000305" key="10"/>
<evidence type="ECO:0000305" key="11">
    <source>
    </source>
</evidence>
<evidence type="ECO:0007744" key="12">
    <source>
        <dbReference type="PDB" id="1KOZ"/>
    </source>
</evidence>
<evidence type="ECO:0007829" key="13">
    <source>
        <dbReference type="PDB" id="1KOZ"/>
    </source>
</evidence>
<name>WGRTX_GRARO</name>
<dbReference type="EMBL" id="AB612243">
    <property type="protein sequence ID" value="BAK55735.1"/>
    <property type="molecule type" value="mRNA"/>
</dbReference>
<dbReference type="PDB" id="1KOZ">
    <property type="method" value="NMR"/>
    <property type="chains" value="A=50-85"/>
</dbReference>
<dbReference type="PDBsum" id="1KOZ"/>
<dbReference type="SMR" id="P60590"/>
<dbReference type="TCDB" id="8.B.5.3.7">
    <property type="family name" value="the na(+)/k(+)/ca(2+) channel targeting tarantula huwentoxin (tht) family"/>
</dbReference>
<dbReference type="ArachnoServer" id="AS000426">
    <property type="toxin name" value="omega-theraphotoxin-Gr1a"/>
</dbReference>
<dbReference type="EvolutionaryTrace" id="P60590"/>
<dbReference type="GO" id="GO:0005576">
    <property type="term" value="C:extracellular region"/>
    <property type="evidence" value="ECO:0007669"/>
    <property type="project" value="UniProtKB-SubCell"/>
</dbReference>
<dbReference type="GO" id="GO:0019855">
    <property type="term" value="F:calcium channel inhibitor activity"/>
    <property type="evidence" value="ECO:0000314"/>
    <property type="project" value="CACAO"/>
</dbReference>
<dbReference type="GO" id="GO:0019870">
    <property type="term" value="F:potassium channel inhibitor activity"/>
    <property type="evidence" value="ECO:0000314"/>
    <property type="project" value="CACAO"/>
</dbReference>
<dbReference type="GO" id="GO:0017080">
    <property type="term" value="F:sodium channel regulator activity"/>
    <property type="evidence" value="ECO:0007669"/>
    <property type="project" value="UniProtKB-KW"/>
</dbReference>
<dbReference type="GO" id="GO:0090729">
    <property type="term" value="F:toxin activity"/>
    <property type="evidence" value="ECO:0007669"/>
    <property type="project" value="UniProtKB-KW"/>
</dbReference>
<dbReference type="InterPro" id="IPR011696">
    <property type="entry name" value="Huwentoxin-1"/>
</dbReference>
<dbReference type="Pfam" id="PF07740">
    <property type="entry name" value="Toxin_12"/>
    <property type="match status" value="1"/>
</dbReference>
<dbReference type="SUPFAM" id="SSF57059">
    <property type="entry name" value="omega toxin-like"/>
    <property type="match status" value="1"/>
</dbReference>
<protein>
    <recommendedName>
        <fullName evidence="10">Omega-theraphotoxin-Gr1a</fullName>
        <shortName evidence="10">Omega-TRTX-Gr1a</shortName>
    </recommendedName>
    <alternativeName>
        <fullName evidence="9">Omega-grammotoxin SIA</fullName>
        <shortName>Omega-GTX SIA</shortName>
        <shortName>Omega-GrTx SIA</shortName>
        <shortName evidence="9">Omega-GsTx SIA</shortName>
    </alternativeName>
</protein>
<reference key="1">
    <citation type="journal article" date="2011" name="Toxicon">
        <title>Characterization of voltage-dependent calcium channel blocking peptides from the venom of the tarantula Grammostola rosea.</title>
        <authorList>
            <person name="Ono S."/>
            <person name="Kimura T."/>
            <person name="Kubo T."/>
        </authorList>
    </citation>
    <scope>NUCLEOTIDE SEQUENCE [MRNA]</scope>
    <scope>PROTEIN SEQUENCE OF 50-85</scope>
    <scope>FUNCTION</scope>
    <source>
        <tissue>Venom</tissue>
        <tissue>Venom gland</tissue>
    </source>
</reference>
<reference key="2">
    <citation type="journal article" date="1993" name="Mol. Pharmacol.">
        <title>Isolation and pharmacological characterization of omega-grammotoxin SIA, a novel peptide inhibitor of neuronal voltage-sensitive calcium channel responses.</title>
        <authorList>
            <person name="Lampe R.A."/>
            <person name="Defeo P.A."/>
            <person name="Davison M.D."/>
            <person name="Young J."/>
            <person name="Herman J.L."/>
            <person name="Spreen R.C."/>
            <person name="Horn M.B."/>
            <person name="Mangano T.J."/>
            <person name="Keith R.A."/>
        </authorList>
    </citation>
    <scope>PROTEIN SEQUENCE OF 50-85</scope>
    <scope>AMIDATION AT VAL-85</scope>
    <scope>FUNCTION</scope>
    <scope>MASS SPECTROMETRY</scope>
    <scope>SUBCELLULAR LOCATION</scope>
</reference>
<reference key="3">
    <citation type="journal article" date="1995" name="Neurosci. Lett.">
        <title>Complete and reversible block by omega-grammotoxin SIA of glutamatergic synaptic transmission between cultured rat hippocampal neurons.</title>
        <authorList>
            <person name="Piser T.M."/>
            <person name="Lampe R.A."/>
            <person name="Keith R.A."/>
            <person name="Thayer S.A."/>
        </authorList>
    </citation>
    <scope>FUNCTION</scope>
</reference>
<reference key="4">
    <citation type="journal article" date="1997" name="Mol. Pharmacol.">
        <title>Voltage-dependent inhibition of N- and P-type calcium channels by the peptide toxin omega-grammotoxin-SIA.</title>
        <authorList>
            <person name="McDonough S.I."/>
            <person name="Lampe R.A."/>
            <person name="Keith R.A."/>
            <person name="Bean B.P."/>
        </authorList>
    </citation>
    <scope>FUNCTION</scope>
</reference>
<reference key="5">
    <citation type="journal article" date="1998" name="Proc. Natl. Acad. Sci. U.S.A.">
        <title>Gating modifier toxins reveal a conserved structural motif in voltage-gated Ca2+ and K+ channels.</title>
        <authorList>
            <person name="Li-Smerin Y."/>
            <person name="Swartz K.J."/>
        </authorList>
    </citation>
    <scope>FUNCTION</scope>
</reference>
<reference key="6">
    <citation type="journal article" date="2018" name="Nat. Struct. Mol. Biol.">
        <title>Screening, large-scale production and structure-based classification of cystine-dense peptides.</title>
        <authorList>
            <person name="Correnti C.E."/>
            <person name="Gewe M.M."/>
            <person name="Mehlin C."/>
            <person name="Bandaranayake A.D."/>
            <person name="Johnsen W.A."/>
            <person name="Rupert P.B."/>
            <person name="Brusniak M.Y."/>
            <person name="Clarke M."/>
            <person name="Burke S.E."/>
            <person name="De Van Der Schueren W."/>
            <person name="Pilat K."/>
            <person name="Turnbaugh S.M."/>
            <person name="May D."/>
            <person name="Watson A."/>
            <person name="Chan M.K."/>
            <person name="Bahl C.D."/>
            <person name="Olson J.M."/>
            <person name="Strong R.K."/>
        </authorList>
    </citation>
    <scope>FUNCTION</scope>
    <scope>SYNTHESIS OF 50-85</scope>
</reference>
<reference key="7">
    <citation type="journal article" date="2002" name="J. Mol. Biol.">
        <title>Solution structure of omega-grammotoxin SIA, a gating modifier of P/Q and N-type Ca(2+) channel.</title>
        <authorList>
            <person name="Takeuchi K."/>
            <person name="Park E.J."/>
            <person name="Lee C.W."/>
            <person name="Kim J.I."/>
            <person name="Takahashi H."/>
            <person name="Swartz K.J."/>
            <person name="Shimada I."/>
        </authorList>
    </citation>
    <scope>STRUCTURE BY NMR OF 50-85</scope>
    <scope>DISULFIDE BONDS</scope>
    <scope>SYNTHESIS</scope>
</reference>
<organism>
    <name type="scientific">Grammostola rosea</name>
    <name type="common">Chilean rose tarantula</name>
    <name type="synonym">Grammostola spatulata</name>
    <dbReference type="NCBI Taxonomy" id="432528"/>
    <lineage>
        <taxon>Eukaryota</taxon>
        <taxon>Metazoa</taxon>
        <taxon>Ecdysozoa</taxon>
        <taxon>Arthropoda</taxon>
        <taxon>Chelicerata</taxon>
        <taxon>Arachnida</taxon>
        <taxon>Araneae</taxon>
        <taxon>Mygalomorphae</taxon>
        <taxon>Theraphosidae</taxon>
        <taxon>Grammostola</taxon>
    </lineage>
</organism>
<proteinExistence type="evidence at protein level"/>
<keyword id="KW-0002">3D-structure</keyword>
<keyword id="KW-0027">Amidation</keyword>
<keyword id="KW-0108">Calcium channel impairing toxin</keyword>
<keyword id="KW-0903">Direct protein sequencing</keyword>
<keyword id="KW-1015">Disulfide bond</keyword>
<keyword id="KW-0872">Ion channel impairing toxin</keyword>
<keyword id="KW-0960">Knottin</keyword>
<keyword id="KW-0528">Neurotoxin</keyword>
<keyword id="KW-0632">Potassium channel impairing toxin</keyword>
<keyword id="KW-0964">Secreted</keyword>
<keyword id="KW-0732">Signal</keyword>
<keyword id="KW-0800">Toxin</keyword>
<keyword id="KW-1218">Voltage-gated calcium channel impairing toxin</keyword>
<keyword id="KW-1220">Voltage-gated potassium channel impairing toxin</keyword>
<keyword id="KW-0738">Voltage-gated sodium channel impairing toxin</keyword>
<accession>P60590</accession>
<accession>F8WQV8</accession>
<feature type="signal peptide" evidence="1">
    <location>
        <begin position="1"/>
        <end position="24"/>
    </location>
</feature>
<feature type="propeptide" id="PRO_0000414297" evidence="3 5">
    <location>
        <begin position="25"/>
        <end position="49"/>
    </location>
</feature>
<feature type="peptide" id="PRO_0000045015" description="Omega-theraphotoxin-Gr1a" evidence="3 5">
    <location>
        <begin position="50"/>
        <end position="85"/>
    </location>
</feature>
<feature type="modified residue" description="Valine amide" evidence="5">
    <location>
        <position position="85"/>
    </location>
</feature>
<feature type="disulfide bond" evidence="2 12">
    <location>
        <begin position="51"/>
        <end position="65"/>
    </location>
</feature>
<feature type="disulfide bond" evidence="2 12">
    <location>
        <begin position="58"/>
        <end position="70"/>
    </location>
</feature>
<feature type="disulfide bond" evidence="2 12">
    <location>
        <begin position="64"/>
        <end position="79"/>
    </location>
</feature>
<feature type="strand" evidence="13">
    <location>
        <begin position="60"/>
        <end position="64"/>
    </location>
</feature>
<feature type="strand" evidence="13">
    <location>
        <begin position="68"/>
        <end position="70"/>
    </location>
</feature>
<feature type="strand" evidence="13">
    <location>
        <begin position="73"/>
        <end position="78"/>
    </location>
</feature>
<comment type="function">
    <text evidence="3 4 5 6 7 8">Inhibits P/Q- (Cav2.1/CACNA1A) and N-type (Cav2.2/CACNA1B) voltage-gated calcium channel by modifying voltage-dependent gating (PubMed:29483648, PubMed:9415720). It selectively and reversibly blocks the calcium channels coupled to glutamate release (PubMed:8848236). Also inhibits potassium channels (Kv2.1/KCNB1) with lower affinity (PubMed:29483648, PubMed:9671721). Has also been shown to weakly inhibit Kv11.1/KCNH2/ERG1, Kv1.2/KCNA2, Kv1.3/KCNA3, Nav1.5/SCN5A, Nav1.7/SCN9A and TRPV1 (PubMed:29483648).</text>
</comment>
<comment type="subcellular location">
    <subcellularLocation>
        <location evidence="5">Secreted</location>
    </subcellularLocation>
</comment>
<comment type="tissue specificity">
    <text evidence="11">Expressed by the venom gland.</text>
</comment>
<comment type="domain">
    <text evidence="2">The presence of a 'disulfide through disulfide knot' structurally defines this protein as a knottin.</text>
</comment>
<comment type="mass spectrometry" mass="4109.2" method="Electrospray" evidence="5"/>
<comment type="similarity">
    <text evidence="10">Belongs to the neurotoxin 10 (Hwtx-1) family. 07 (GrTx) subfamily.</text>
</comment>